<proteinExistence type="evidence at protein level"/>
<reference key="1">
    <citation type="journal article" date="2004" name="J. Infect. Dis.">
        <title>Progress toward characterization of the group A Streptococcus metagenome: complete genome sequence of a macrolide-resistant serotype M6 strain.</title>
        <authorList>
            <person name="Banks D.J."/>
            <person name="Porcella S.F."/>
            <person name="Barbian K.D."/>
            <person name="Beres S.B."/>
            <person name="Philips L.E."/>
            <person name="Voyich J.M."/>
            <person name="DeLeo F.R."/>
            <person name="Martin J.M."/>
            <person name="Somerville G.A."/>
            <person name="Musser J.M."/>
        </authorList>
    </citation>
    <scope>NUCLEOTIDE SEQUENCE [LARGE SCALE GENOMIC DNA]</scope>
    <source>
        <strain>ATCC BAA-946 / MGAS10394</strain>
    </source>
</reference>
<reference key="2">
    <citation type="submission" date="2000-05" db="UniProtKB">
        <title>Two-dimensional gel electrophoresis map of Streptococcus pyogenes proteins.</title>
        <authorList>
            <person name="Hogan D.A."/>
            <person name="Du P."/>
            <person name="Stevenson T.I."/>
            <person name="Whitton M."/>
            <person name="Kilby G.W."/>
            <person name="Rogers J."/>
            <person name="VanBogelen R.A."/>
        </authorList>
    </citation>
    <scope>PROTEIN SEQUENCE OF 17-29; 45-53; 60-68; 101-117 AND 182-195</scope>
    <scope>MASS SPECTROMETRY</scope>
    <source>
        <strain evidence="3">JRS4 / Serotype M6</strain>
    </source>
</reference>
<evidence type="ECO:0000250" key="1">
    <source>
        <dbReference type="UniProtKB" id="P26394"/>
    </source>
</evidence>
<evidence type="ECO:0000250" key="2">
    <source>
        <dbReference type="UniProtKB" id="Q9HU21"/>
    </source>
</evidence>
<evidence type="ECO:0000269" key="3">
    <source ref="2"/>
</evidence>
<evidence type="ECO:0000305" key="4"/>
<feature type="chain" id="PRO_0000259667" description="Protein RmlC homolog">
    <location>
        <begin position="1"/>
        <end position="197"/>
    </location>
</feature>
<feature type="active site" description="Proton acceptor" evidence="2">
    <location>
        <position position="76"/>
    </location>
</feature>
<feature type="active site" description="Proton donor" evidence="2">
    <location>
        <position position="140"/>
    </location>
</feature>
<comment type="function">
    <text evidence="1">Could catalyze a 3,5-epimerization.</text>
</comment>
<comment type="mass spectrometry"/>
<comment type="similarity">
    <text evidence="4">Belongs to the dTDP-4-dehydrorhamnose 3,5-epimerase family.</text>
</comment>
<gene>
    <name type="primary">rfbC</name>
    <name type="ordered locus">M6_Spy0761</name>
</gene>
<name>RMLCL_STRP6</name>
<keyword id="KW-0903">Direct protein sequencing</keyword>
<keyword id="KW-0413">Isomerase</keyword>
<accession>Q5XCG7</accession>
<accession>P82566</accession>
<dbReference type="EC" id="5.1.3.-" evidence="4"/>
<dbReference type="EMBL" id="CP000003">
    <property type="protein sequence ID" value="AAT86896.1"/>
    <property type="molecule type" value="Genomic_DNA"/>
</dbReference>
<dbReference type="RefSeq" id="WP_002990099.1">
    <property type="nucleotide sequence ID" value="NC_006086.1"/>
</dbReference>
<dbReference type="SMR" id="Q5XCG7"/>
<dbReference type="KEGG" id="spa:M6_Spy0761"/>
<dbReference type="HOGENOM" id="CLU_090940_2_0_9"/>
<dbReference type="Proteomes" id="UP000001167">
    <property type="component" value="Chromosome"/>
</dbReference>
<dbReference type="GO" id="GO:0005829">
    <property type="term" value="C:cytosol"/>
    <property type="evidence" value="ECO:0007669"/>
    <property type="project" value="TreeGrafter"/>
</dbReference>
<dbReference type="GO" id="GO:0008830">
    <property type="term" value="F:dTDP-4-dehydrorhamnose 3,5-epimerase activity"/>
    <property type="evidence" value="ECO:0007669"/>
    <property type="project" value="InterPro"/>
</dbReference>
<dbReference type="GO" id="GO:0019305">
    <property type="term" value="P:dTDP-rhamnose biosynthetic process"/>
    <property type="evidence" value="ECO:0007669"/>
    <property type="project" value="TreeGrafter"/>
</dbReference>
<dbReference type="GO" id="GO:0000271">
    <property type="term" value="P:polysaccharide biosynthetic process"/>
    <property type="evidence" value="ECO:0007669"/>
    <property type="project" value="TreeGrafter"/>
</dbReference>
<dbReference type="Gene3D" id="2.60.120.10">
    <property type="entry name" value="Jelly Rolls"/>
    <property type="match status" value="1"/>
</dbReference>
<dbReference type="InterPro" id="IPR000888">
    <property type="entry name" value="RmlC-like"/>
</dbReference>
<dbReference type="InterPro" id="IPR014710">
    <property type="entry name" value="RmlC-like_jellyroll"/>
</dbReference>
<dbReference type="InterPro" id="IPR011051">
    <property type="entry name" value="RmlC_Cupin_sf"/>
</dbReference>
<dbReference type="PANTHER" id="PTHR21047">
    <property type="entry name" value="DTDP-6-DEOXY-D-GLUCOSE-3,5 EPIMERASE"/>
    <property type="match status" value="1"/>
</dbReference>
<dbReference type="PANTHER" id="PTHR21047:SF2">
    <property type="entry name" value="THYMIDINE DIPHOSPHO-4-KETO-RHAMNOSE 3,5-EPIMERASE"/>
    <property type="match status" value="1"/>
</dbReference>
<dbReference type="Pfam" id="PF00908">
    <property type="entry name" value="dTDP_sugar_isom"/>
    <property type="match status" value="1"/>
</dbReference>
<dbReference type="SUPFAM" id="SSF51182">
    <property type="entry name" value="RmlC-like cupins"/>
    <property type="match status" value="1"/>
</dbReference>
<organism>
    <name type="scientific">Streptococcus pyogenes serotype M6 (strain ATCC BAA-946 / MGAS10394)</name>
    <dbReference type="NCBI Taxonomy" id="286636"/>
    <lineage>
        <taxon>Bacteria</taxon>
        <taxon>Bacillati</taxon>
        <taxon>Bacillota</taxon>
        <taxon>Bacilli</taxon>
        <taxon>Lactobacillales</taxon>
        <taxon>Streptococcaceae</taxon>
        <taxon>Streptococcus</taxon>
    </lineage>
</organism>
<protein>
    <recommendedName>
        <fullName evidence="4">Protein RmlC homolog</fullName>
        <ecNumber evidence="4">5.1.3.-</ecNumber>
    </recommendedName>
</protein>
<sequence>MTETFFDKPLACREIKEIPGLLEFDIPVRGDNRGWFKENFQKEKMLPIGFPERFFEEGKLQNNVSFSRQHVLRGLHAEPWDKYISVADDGKVLGAWVDLREGETFGNVYQTVIDASKGMFVPRGVANGFQVLSETVSYSYLVNDYWALDLKPKYAFVNYADPSLGITWENLAAAEVSEADKNHPLLSDVKPLKPKDL</sequence>